<geneLocation type="plasmid">
    <name>pLAB1000</name>
</geneLocation>
<proteinExistence type="inferred from homology"/>
<accession>P35857</accession>
<dbReference type="EMBL" id="M55222">
    <property type="protein sequence ID" value="AAA98163.1"/>
    <property type="molecule type" value="Genomic_DNA"/>
</dbReference>
<dbReference type="PIR" id="B35390">
    <property type="entry name" value="B35390"/>
</dbReference>
<dbReference type="RefSeq" id="WP_033179285.1">
    <property type="nucleotide sequence ID" value="NC_025165.1"/>
</dbReference>
<dbReference type="RefSeq" id="YP_009070088.1">
    <property type="nucleotide sequence ID" value="NC_025165.1"/>
</dbReference>
<dbReference type="GO" id="GO:0003677">
    <property type="term" value="F:DNA binding"/>
    <property type="evidence" value="ECO:0007669"/>
    <property type="project" value="InterPro"/>
</dbReference>
<dbReference type="GO" id="GO:0006260">
    <property type="term" value="P:DNA replication"/>
    <property type="evidence" value="ECO:0007669"/>
    <property type="project" value="UniProtKB-KW"/>
</dbReference>
<dbReference type="InterPro" id="IPR000989">
    <property type="entry name" value="Rep"/>
</dbReference>
<dbReference type="Pfam" id="PF01446">
    <property type="entry name" value="Rep_1"/>
    <property type="match status" value="1"/>
</dbReference>
<reference key="1">
    <citation type="journal article" date="1990" name="J. Bacteriol.">
        <title>Lactobacillus hilgardii plasmid pLAB1000 consists of two functional cassettes commonly found in other Gram-positive organisms.</title>
        <authorList>
            <person name="Josson K."/>
            <person name="Soetaert P."/>
            <person name="Michiels F."/>
            <person name="Joos H."/>
            <person name="Mahillon J."/>
        </authorList>
    </citation>
    <scope>NUCLEOTIDE SEQUENCE [GENOMIC DNA]</scope>
</reference>
<protein>
    <recommendedName>
        <fullName>Protein rep</fullName>
    </recommendedName>
    <alternativeName>
        <fullName>Replication protein</fullName>
    </alternativeName>
</protein>
<comment type="function">
    <text>Produces a single-strand nick in a specific site of the plasmid, and this nick results in single-strand replication by rolling circle mechanism.</text>
</comment>
<comment type="similarity">
    <text evidence="2">Belongs to the Gram-positive plasmids replication protein type 1 family.</text>
</comment>
<name>REP_LENHI</name>
<organism>
    <name type="scientific">Lentilactobacillus hilgardii</name>
    <name type="common">Lactobacillus hilgardii</name>
    <dbReference type="NCBI Taxonomy" id="1588"/>
    <lineage>
        <taxon>Bacteria</taxon>
        <taxon>Bacillati</taxon>
        <taxon>Bacillota</taxon>
        <taxon>Bacilli</taxon>
        <taxon>Lactobacillales</taxon>
        <taxon>Lactobacillaceae</taxon>
        <taxon>Lentilactobacillus</taxon>
    </lineage>
</organism>
<sequence length="314" mass="37045">MSKKILKDVSRNRKERPWRERKLENLQYAEYLRILNFKKANRVKECGEVLRFVADDEGRLRLYQTWFCKSRLCPLCNWRRSMGQSNQLMQVLDEAHKQRKTGRFLFLTLTAENASGENLKQEVRKMGRAISKLFQYKKPAKNLLGYVRSTEITINKNGTYHQHMHVLLFVKPTYFKDSANYINQAEWSKLWQRAMKLDYQPIVNVEAVRSNKAKGKNSLIASAQETAKYQVKSKDILTNDQERDLQVVEDLEQGLAGSRQISYGGLFKEIRKQLQLEDVDAHLINVDDDKVKIDEVVREVVAKWDYNKQNYFIW</sequence>
<keyword id="KW-0235">DNA replication</keyword>
<keyword id="KW-0614">Plasmid</keyword>
<evidence type="ECO:0000250" key="1"/>
<evidence type="ECO:0000305" key="2"/>
<gene>
    <name type="primary">rep</name>
</gene>
<feature type="chain" id="PRO_0000068320" description="Protein rep">
    <location>
        <begin position="1"/>
        <end position="314"/>
    </location>
</feature>
<feature type="binding site" evidence="1">
    <location>
        <position position="229"/>
    </location>
    <ligand>
        <name>DNA</name>
        <dbReference type="ChEBI" id="CHEBI:16991"/>
    </ligand>
</feature>